<feature type="chain" id="PRO_0000348327" description="UPF0637 protein MW0989">
    <location>
        <begin position="1"/>
        <end position="204"/>
    </location>
</feature>
<accession>Q8NX72</accession>
<reference key="1">
    <citation type="journal article" date="2002" name="Lancet">
        <title>Genome and virulence determinants of high virulence community-acquired MRSA.</title>
        <authorList>
            <person name="Baba T."/>
            <person name="Takeuchi F."/>
            <person name="Kuroda M."/>
            <person name="Yuzawa H."/>
            <person name="Aoki K."/>
            <person name="Oguchi A."/>
            <person name="Nagai Y."/>
            <person name="Iwama N."/>
            <person name="Asano K."/>
            <person name="Naimi T."/>
            <person name="Kuroda H."/>
            <person name="Cui L."/>
            <person name="Yamamoto K."/>
            <person name="Hiramatsu K."/>
        </authorList>
    </citation>
    <scope>NUCLEOTIDE SEQUENCE [LARGE SCALE GENOMIC DNA]</scope>
    <source>
        <strain>MW2</strain>
    </source>
</reference>
<comment type="similarity">
    <text evidence="1">Belongs to the UPF0637 family.</text>
</comment>
<evidence type="ECO:0000255" key="1">
    <source>
        <dbReference type="HAMAP-Rule" id="MF_01851"/>
    </source>
</evidence>
<name>Y989_STAAW</name>
<protein>
    <recommendedName>
        <fullName evidence="1">UPF0637 protein MW0989</fullName>
    </recommendedName>
</protein>
<gene>
    <name type="ordered locus">MW0989</name>
</gene>
<dbReference type="EMBL" id="BA000033">
    <property type="protein sequence ID" value="BAB94854.1"/>
    <property type="molecule type" value="Genomic_DNA"/>
</dbReference>
<dbReference type="RefSeq" id="WP_000170601.1">
    <property type="nucleotide sequence ID" value="NC_003923.1"/>
</dbReference>
<dbReference type="SMR" id="Q8NX72"/>
<dbReference type="KEGG" id="sam:MW0989"/>
<dbReference type="HOGENOM" id="CLU_096059_0_0_9"/>
<dbReference type="Gene3D" id="3.30.930.20">
    <property type="entry name" value="Protein of unknown function DUF1054"/>
    <property type="match status" value="1"/>
</dbReference>
<dbReference type="HAMAP" id="MF_01851">
    <property type="entry name" value="UPF0637"/>
    <property type="match status" value="1"/>
</dbReference>
<dbReference type="InterPro" id="IPR009403">
    <property type="entry name" value="UPF0637"/>
</dbReference>
<dbReference type="InterPro" id="IPR053707">
    <property type="entry name" value="UPF0637_domain_sf"/>
</dbReference>
<dbReference type="Pfam" id="PF06335">
    <property type="entry name" value="DUF1054"/>
    <property type="match status" value="1"/>
</dbReference>
<dbReference type="PIRSF" id="PIRSF021332">
    <property type="entry name" value="DUF1054"/>
    <property type="match status" value="1"/>
</dbReference>
<dbReference type="SUPFAM" id="SSF142913">
    <property type="entry name" value="YktB/PF0168-like"/>
    <property type="match status" value="1"/>
</dbReference>
<proteinExistence type="inferred from homology"/>
<organism>
    <name type="scientific">Staphylococcus aureus (strain MW2)</name>
    <dbReference type="NCBI Taxonomy" id="196620"/>
    <lineage>
        <taxon>Bacteria</taxon>
        <taxon>Bacillati</taxon>
        <taxon>Bacillota</taxon>
        <taxon>Bacilli</taxon>
        <taxon>Bacillales</taxon>
        <taxon>Staphylococcaceae</taxon>
        <taxon>Staphylococcus</taxon>
    </lineage>
</organism>
<sequence length="204" mass="24002">MTKYTFKPKDFKAFNVEGLDARMEALNEYIRPQLHELGEYFSDFFTSQTGETFYPHVAKHARRSVNPPKDTWVAFATNKRGYKMLPHFQIGMFEDQLFVMFGIMHEAKDKATRAKVFERNFKAIQQLPDDYRVCLDHMKPDKPFIKDLTDDDLKEAIQRAINVKKGEFFIARAITPQDKRLKSDKAFIAFLEETFDQFLPFYSA</sequence>